<organismHost>
    <name type="scientific">Enterobacteriaceae</name>
    <dbReference type="NCBI Taxonomy" id="543"/>
</organismHost>
<dbReference type="EC" id="4.2.2.n2" evidence="1"/>
<dbReference type="EMBL" id="AF063097">
    <property type="protein sequence ID" value="AAD03276.1"/>
    <property type="molecule type" value="Genomic_DNA"/>
</dbReference>
<dbReference type="PIR" id="D55855">
    <property type="entry name" value="D55855"/>
</dbReference>
<dbReference type="RefSeq" id="NP_046765.1">
    <property type="nucleotide sequence ID" value="NC_001895.1"/>
</dbReference>
<dbReference type="SMR" id="P51771"/>
<dbReference type="CAZy" id="GH104">
    <property type="family name" value="Glycoside Hydrolase Family 104"/>
</dbReference>
<dbReference type="GeneID" id="77440796"/>
<dbReference type="KEGG" id="vg:77440796"/>
<dbReference type="Proteomes" id="UP000009092">
    <property type="component" value="Genome"/>
</dbReference>
<dbReference type="GO" id="GO:0030430">
    <property type="term" value="C:host cell cytoplasm"/>
    <property type="evidence" value="ECO:0007669"/>
    <property type="project" value="UniProtKB-SubCell"/>
</dbReference>
<dbReference type="GO" id="GO:0016829">
    <property type="term" value="F:lyase activity"/>
    <property type="evidence" value="ECO:0007669"/>
    <property type="project" value="UniProtKB-UniRule"/>
</dbReference>
<dbReference type="GO" id="GO:0003796">
    <property type="term" value="F:lysozyme activity"/>
    <property type="evidence" value="ECO:0007669"/>
    <property type="project" value="UniProtKB-UniRule"/>
</dbReference>
<dbReference type="GO" id="GO:0042742">
    <property type="term" value="P:defense response to bacterium"/>
    <property type="evidence" value="ECO:0007669"/>
    <property type="project" value="UniProtKB-KW"/>
</dbReference>
<dbReference type="GO" id="GO:0009253">
    <property type="term" value="P:peptidoglycan catabolic process"/>
    <property type="evidence" value="ECO:0007669"/>
    <property type="project" value="UniProtKB-UniRule"/>
</dbReference>
<dbReference type="GO" id="GO:0044659">
    <property type="term" value="P:viral release from host cell by cytolysis"/>
    <property type="evidence" value="ECO:0007669"/>
    <property type="project" value="UniProtKB-UniRule"/>
</dbReference>
<dbReference type="CDD" id="cd00736">
    <property type="entry name" value="lambda_lys-like"/>
    <property type="match status" value="1"/>
</dbReference>
<dbReference type="Gene3D" id="1.10.530.10">
    <property type="match status" value="1"/>
</dbReference>
<dbReference type="HAMAP" id="MF_04109">
    <property type="entry name" value="ENDOLYSIN_LAMBDA"/>
    <property type="match status" value="1"/>
</dbReference>
<dbReference type="InterPro" id="IPR034691">
    <property type="entry name" value="Endolysin_lambda_type"/>
</dbReference>
<dbReference type="InterPro" id="IPR023346">
    <property type="entry name" value="Lysozyme-like_dom_sf"/>
</dbReference>
<dbReference type="SUPFAM" id="SSF53955">
    <property type="entry name" value="Lysozyme-like"/>
    <property type="match status" value="1"/>
</dbReference>
<proteinExistence type="inferred from homology"/>
<feature type="chain" id="PRO_0000218100" description="Endolysin">
    <location>
        <begin position="1"/>
        <end position="165"/>
    </location>
</feature>
<feature type="active site" evidence="1">
    <location>
        <position position="21"/>
    </location>
</feature>
<feature type="sequence variant" description="In temperature-sensitive KTS60.">
    <original>G</original>
    <variation>R</variation>
    <location>
        <position position="40"/>
    </location>
</feature>
<keyword id="KW-0929">Antimicrobial</keyword>
<keyword id="KW-0081">Bacteriolytic enzyme</keyword>
<keyword id="KW-0204">Cytolysis</keyword>
<keyword id="KW-0578">Host cell lysis by virus</keyword>
<keyword id="KW-1035">Host cytoplasm</keyword>
<keyword id="KW-0456">Lyase</keyword>
<keyword id="KW-1185">Reference proteome</keyword>
<keyword id="KW-1188">Viral release from host cell</keyword>
<organism>
    <name type="scientific">Escherichia phage P2</name>
    <name type="common">Bacteriophage P2</name>
    <dbReference type="NCBI Taxonomy" id="2905681"/>
    <lineage>
        <taxon>Viruses</taxon>
        <taxon>Duplodnaviria</taxon>
        <taxon>Heunggongvirae</taxon>
        <taxon>Uroviricota</taxon>
        <taxon>Caudoviricetes</taxon>
        <taxon>Peduoviridae</taxon>
        <taxon>Peduovirus</taxon>
        <taxon>Peduovirus P2</taxon>
    </lineage>
</organism>
<name>ENLYS_BPP2</name>
<evidence type="ECO:0000255" key="1">
    <source>
        <dbReference type="HAMAP-Rule" id="MF_04109"/>
    </source>
</evidence>
<evidence type="ECO:0000305" key="2"/>
<comment type="function">
    <text evidence="1">Endolysin with transglycosylase activity that degrades host peptidoglycans and participates with the holin and spanin proteins in the sequential events which lead to the programmed host cell lysis releasing the mature viral particles. Once the holin has permeabilized the host cell membrane, the endolysin can reach the periplasm and break down the peptidoglycan layer.</text>
</comment>
<comment type="catalytic activity">
    <reaction evidence="1">
        <text>Endolytic cleavage of the (1-&gt;4)-beta-glycosidic linkage between N-acetylmuramic acid (MurNAc) and N-acetylglucosamine (GlcNAc) residues in peptidoglycan with concomitant formation of a 1,6-anhydrobond in the MurNAc residue.</text>
        <dbReference type="EC" id="4.2.2.n2"/>
    </reaction>
</comment>
<comment type="subunit">
    <text evidence="1">Monomer.</text>
</comment>
<comment type="subcellular location">
    <subcellularLocation>
        <location evidence="1">Host cytoplasm</location>
    </subcellularLocation>
    <text evidence="1">The endolysin is cytoplasmic, but can reach the periplasmic space with the help of the holins which disrupt the host cell membrane.</text>
</comment>
<comment type="similarity">
    <text evidence="1">Belongs to the glycosyl hydrolase 24 family.</text>
</comment>
<sequence length="165" mass="18538">MPVINTHQNIAAFLDMLAVSEGTANHPLTKNRGYDVIVTGLDGKPEIFTDYSDHPFAHGRPAKVFNRRGEKSTASGRYQQLYLFWPHYRKQLALPDFSPLSQDRLAIQLIRERGALDDIRAGRIERAISRCRNIWASLPGAGYGQREHSLEKLVTVWRTAGGVPA</sequence>
<reference key="1">
    <citation type="journal article" date="1994" name="J. Bacteriol.">
        <title>Functions involved in bacteriophage P2-induced host cell lysis and identification of a new tail gene.</title>
        <authorList>
            <person name="Ziermann R."/>
            <person name="Bartlett B."/>
            <person name="Calendar R."/>
            <person name="Christie G.E."/>
        </authorList>
    </citation>
    <scope>NUCLEOTIDE SEQUENCE [GENOMIC DNA]</scope>
</reference>
<accession>P51771</accession>
<gene>
    <name type="primary">K</name>
</gene>
<protein>
    <recommendedName>
        <fullName evidence="1">Endolysin</fullName>
        <ecNumber evidence="1">4.2.2.n2</ecNumber>
    </recommendedName>
    <alternativeName>
        <fullName evidence="1">Lysis protein</fullName>
    </alternativeName>
    <alternativeName>
        <fullName evidence="1">Lysozyme</fullName>
    </alternativeName>
    <alternativeName>
        <fullName evidence="2">Protein gpK</fullName>
    </alternativeName>
    <alternativeName>
        <fullName evidence="1">Transglycosylase</fullName>
    </alternativeName>
</protein>